<feature type="chain" id="PRO_0000183039" description="Pyrimidine operon regulatory protein">
    <location>
        <begin position="1"/>
        <end position="173"/>
    </location>
</feature>
<feature type="short sequence motif" description="PRPP-binding" evidence="2">
    <location>
        <begin position="93"/>
        <end position="105"/>
    </location>
</feature>
<feature type="binding site" evidence="1">
    <location>
        <begin position="40"/>
        <end position="41"/>
    </location>
    <ligand>
        <name>substrate</name>
    </ligand>
</feature>
<feature type="binding site" evidence="1">
    <location>
        <begin position="97"/>
        <end position="105"/>
    </location>
    <ligand>
        <name>substrate</name>
    </ligand>
</feature>
<feature type="binding site" evidence="1">
    <location>
        <position position="130"/>
    </location>
    <ligand>
        <name>substrate</name>
    </ligand>
</feature>
<protein>
    <recommendedName>
        <fullName evidence="2">Pyrimidine operon regulatory protein</fullName>
    </recommendedName>
</protein>
<evidence type="ECO:0000250" key="1"/>
<evidence type="ECO:0000255" key="2">
    <source>
        <dbReference type="HAMAP-Rule" id="MF_01219"/>
    </source>
</evidence>
<evidence type="ECO:0000305" key="3"/>
<proteinExistence type="inferred from homology"/>
<accession>Q9CF77</accession>
<organism>
    <name type="scientific">Lactococcus lactis subsp. lactis (strain IL1403)</name>
    <name type="common">Streptococcus lactis</name>
    <dbReference type="NCBI Taxonomy" id="272623"/>
    <lineage>
        <taxon>Bacteria</taxon>
        <taxon>Bacillati</taxon>
        <taxon>Bacillota</taxon>
        <taxon>Bacilli</taxon>
        <taxon>Lactobacillales</taxon>
        <taxon>Streptococcaceae</taxon>
        <taxon>Lactococcus</taxon>
    </lineage>
</organism>
<gene>
    <name evidence="2" type="primary">pyrR</name>
    <name type="ordered locus">LL1604</name>
    <name type="ORF">L0227</name>
</gene>
<sequence>MARKEIIDEITMKRAITRITYEIIERNKELDKLVLIGIKTRGVYLAKRIQERLQQLEGLEIPFGELDTRPFRDDKQAQEDTTEIDIDITGKDVILVDDVLYTGRTIRAAIDGIVKLGRPARVQLAVLVDRGHRELPIRADYVGKNIPTGRDEEIIVQMSEHDGNDSILIKRED</sequence>
<comment type="function">
    <text evidence="1">Regulates transcriptional attenuation of the pyrimidine nucleotide (pyr) operon in response to exogenous pyrimidines, probably by binding to specific sites on pyr mRNA. This probably disrupts an antiterminator hairpin in the RNA and favors formation of a downstream transcription terminator, leading to a reduced expression of downstream genes (By similarity).</text>
</comment>
<comment type="similarity">
    <text evidence="2">Belongs to the purine/pyrimidine phosphoribosyltransferase family. PyrR subfamily.</text>
</comment>
<comment type="caution">
    <text evidence="3">Unlike for B.subtilis, the PyrR protein of L.lactis was shown not to encode UPRTase activity.</text>
</comment>
<name>PYRR_LACLA</name>
<reference key="1">
    <citation type="journal article" date="2001" name="Genome Res.">
        <title>The complete genome sequence of the lactic acid bacterium Lactococcus lactis ssp. lactis IL1403.</title>
        <authorList>
            <person name="Bolotin A."/>
            <person name="Wincker P."/>
            <person name="Mauger S."/>
            <person name="Jaillon O."/>
            <person name="Malarme K."/>
            <person name="Weissenbach J."/>
            <person name="Ehrlich S.D."/>
            <person name="Sorokin A."/>
        </authorList>
    </citation>
    <scope>NUCLEOTIDE SEQUENCE [LARGE SCALE GENOMIC DNA]</scope>
    <source>
        <strain>IL1403</strain>
    </source>
</reference>
<dbReference type="EMBL" id="AE005176">
    <property type="protein sequence ID" value="AAK05702.1"/>
    <property type="molecule type" value="Genomic_DNA"/>
</dbReference>
<dbReference type="PIR" id="D86825">
    <property type="entry name" value="D86825"/>
</dbReference>
<dbReference type="RefSeq" id="NP_267760.1">
    <property type="nucleotide sequence ID" value="NC_002662.1"/>
</dbReference>
<dbReference type="RefSeq" id="WP_010906054.1">
    <property type="nucleotide sequence ID" value="NC_002662.1"/>
</dbReference>
<dbReference type="SMR" id="Q9CF77"/>
<dbReference type="PaxDb" id="272623-L0227"/>
<dbReference type="EnsemblBacteria" id="AAK05702">
    <property type="protein sequence ID" value="AAK05702"/>
    <property type="gene ID" value="L0227"/>
</dbReference>
<dbReference type="GeneID" id="89633800"/>
<dbReference type="KEGG" id="lla:L0227"/>
<dbReference type="PATRIC" id="fig|272623.7.peg.1725"/>
<dbReference type="eggNOG" id="COG2065">
    <property type="taxonomic scope" value="Bacteria"/>
</dbReference>
<dbReference type="HOGENOM" id="CLU_094234_2_1_9"/>
<dbReference type="OrthoDB" id="9802227at2"/>
<dbReference type="Proteomes" id="UP000002196">
    <property type="component" value="Chromosome"/>
</dbReference>
<dbReference type="GO" id="GO:0003723">
    <property type="term" value="F:RNA binding"/>
    <property type="evidence" value="ECO:0007669"/>
    <property type="project" value="UniProtKB-UniRule"/>
</dbReference>
<dbReference type="GO" id="GO:0004845">
    <property type="term" value="F:uracil phosphoribosyltransferase activity"/>
    <property type="evidence" value="ECO:0007669"/>
    <property type="project" value="UniProtKB-UniRule"/>
</dbReference>
<dbReference type="GO" id="GO:0006353">
    <property type="term" value="P:DNA-templated transcription termination"/>
    <property type="evidence" value="ECO:0007669"/>
    <property type="project" value="UniProtKB-UniRule"/>
</dbReference>
<dbReference type="CDD" id="cd06223">
    <property type="entry name" value="PRTases_typeI"/>
    <property type="match status" value="1"/>
</dbReference>
<dbReference type="FunFam" id="3.40.50.2020:FF:000020">
    <property type="entry name" value="Bifunctional protein PyrR"/>
    <property type="match status" value="1"/>
</dbReference>
<dbReference type="Gene3D" id="3.40.50.2020">
    <property type="match status" value="1"/>
</dbReference>
<dbReference type="HAMAP" id="MF_01219">
    <property type="entry name" value="PyrR"/>
    <property type="match status" value="1"/>
</dbReference>
<dbReference type="InterPro" id="IPR000836">
    <property type="entry name" value="PRibTrfase_dom"/>
</dbReference>
<dbReference type="InterPro" id="IPR029057">
    <property type="entry name" value="PRTase-like"/>
</dbReference>
<dbReference type="InterPro" id="IPR023050">
    <property type="entry name" value="PyrR"/>
</dbReference>
<dbReference type="InterPro" id="IPR050137">
    <property type="entry name" value="PyrR_bifunctional"/>
</dbReference>
<dbReference type="NCBIfam" id="NF003548">
    <property type="entry name" value="PRK05205.1-4"/>
    <property type="match status" value="1"/>
</dbReference>
<dbReference type="NCBIfam" id="NF003549">
    <property type="entry name" value="PRK05205.1-5"/>
    <property type="match status" value="1"/>
</dbReference>
<dbReference type="PANTHER" id="PTHR11608">
    <property type="entry name" value="BIFUNCTIONAL PROTEIN PYRR"/>
    <property type="match status" value="1"/>
</dbReference>
<dbReference type="PANTHER" id="PTHR11608:SF0">
    <property type="entry name" value="BIFUNCTIONAL PROTEIN PYRR"/>
    <property type="match status" value="1"/>
</dbReference>
<dbReference type="Pfam" id="PF00156">
    <property type="entry name" value="Pribosyltran"/>
    <property type="match status" value="1"/>
</dbReference>
<dbReference type="SUPFAM" id="SSF53271">
    <property type="entry name" value="PRTase-like"/>
    <property type="match status" value="1"/>
</dbReference>
<keyword id="KW-1185">Reference proteome</keyword>
<keyword id="KW-0694">RNA-binding</keyword>
<keyword id="KW-0804">Transcription</keyword>
<keyword id="KW-0805">Transcription regulation</keyword>
<keyword id="KW-0806">Transcription termination</keyword>